<proteinExistence type="inferred from homology"/>
<protein>
    <recommendedName>
        <fullName evidence="1">Segregation and condensation protein B</fullName>
    </recommendedName>
</protein>
<sequence length="197" mass="22120">MTLDIVNWKAIIEALLYAAGDEGLTKKQLMSVLEVEEVALLDMMSAVKEEYQKQERGIELIEYADSYMLLTKKEYSIYLKKLVETPSKGLSQAALEVLAIVSYKQPITRSEVEEIRGVKSERVLHSLVAKALLCEVGRADGPGRAILYGTTPTFLEQFGLKALDELPPLPENVEADGVQEEADLFFENFNQTFEEIK</sequence>
<reference key="1">
    <citation type="journal article" date="2007" name="PLoS ONE">
        <title>Paradoxical DNA repair and peroxide resistance gene conservation in Bacillus pumilus SAFR-032.</title>
        <authorList>
            <person name="Gioia J."/>
            <person name="Yerrapragada S."/>
            <person name="Qin X."/>
            <person name="Jiang H."/>
            <person name="Igboeli O.C."/>
            <person name="Muzny D."/>
            <person name="Dugan-Rocha S."/>
            <person name="Ding Y."/>
            <person name="Hawes A."/>
            <person name="Liu W."/>
            <person name="Perez L."/>
            <person name="Kovar C."/>
            <person name="Dinh H."/>
            <person name="Lee S."/>
            <person name="Nazareth L."/>
            <person name="Blyth P."/>
            <person name="Holder M."/>
            <person name="Buhay C."/>
            <person name="Tirumalai M.R."/>
            <person name="Liu Y."/>
            <person name="Dasgupta I."/>
            <person name="Bokhetache L."/>
            <person name="Fujita M."/>
            <person name="Karouia F."/>
            <person name="Eswara Moorthy P."/>
            <person name="Siefert J."/>
            <person name="Uzman A."/>
            <person name="Buzumbo P."/>
            <person name="Verma A."/>
            <person name="Zwiya H."/>
            <person name="McWilliams B.D."/>
            <person name="Olowu A."/>
            <person name="Clinkenbeard K.D."/>
            <person name="Newcombe D."/>
            <person name="Golebiewski L."/>
            <person name="Petrosino J.F."/>
            <person name="Nicholson W.L."/>
            <person name="Fox G.E."/>
            <person name="Venkateswaran K."/>
            <person name="Highlander S.K."/>
            <person name="Weinstock G.M."/>
        </authorList>
    </citation>
    <scope>NUCLEOTIDE SEQUENCE [LARGE SCALE GENOMIC DNA]</scope>
    <source>
        <strain>SAFR-032</strain>
    </source>
</reference>
<evidence type="ECO:0000255" key="1">
    <source>
        <dbReference type="HAMAP-Rule" id="MF_01804"/>
    </source>
</evidence>
<accession>A8FEQ7</accession>
<feature type="chain" id="PRO_1000069950" description="Segregation and condensation protein B">
    <location>
        <begin position="1"/>
        <end position="197"/>
    </location>
</feature>
<organism>
    <name type="scientific">Bacillus pumilus (strain SAFR-032)</name>
    <dbReference type="NCBI Taxonomy" id="315750"/>
    <lineage>
        <taxon>Bacteria</taxon>
        <taxon>Bacillati</taxon>
        <taxon>Bacillota</taxon>
        <taxon>Bacilli</taxon>
        <taxon>Bacillales</taxon>
        <taxon>Bacillaceae</taxon>
        <taxon>Bacillus</taxon>
    </lineage>
</organism>
<gene>
    <name evidence="1" type="primary">scpB</name>
    <name type="ordered locus">BPUM_2054</name>
</gene>
<name>SCPB_BACP2</name>
<dbReference type="EMBL" id="CP000813">
    <property type="protein sequence ID" value="ABV62724.1"/>
    <property type="molecule type" value="Genomic_DNA"/>
</dbReference>
<dbReference type="RefSeq" id="WP_012010428.1">
    <property type="nucleotide sequence ID" value="NZ_VEIS01000005.1"/>
</dbReference>
<dbReference type="SMR" id="A8FEQ7"/>
<dbReference type="STRING" id="315750.BPUM_2054"/>
<dbReference type="GeneID" id="5621320"/>
<dbReference type="KEGG" id="bpu:BPUM_2054"/>
<dbReference type="eggNOG" id="COG1386">
    <property type="taxonomic scope" value="Bacteria"/>
</dbReference>
<dbReference type="HOGENOM" id="CLU_045647_5_3_9"/>
<dbReference type="OrthoDB" id="9806226at2"/>
<dbReference type="Proteomes" id="UP000001355">
    <property type="component" value="Chromosome"/>
</dbReference>
<dbReference type="GO" id="GO:0005737">
    <property type="term" value="C:cytoplasm"/>
    <property type="evidence" value="ECO:0007669"/>
    <property type="project" value="UniProtKB-SubCell"/>
</dbReference>
<dbReference type="GO" id="GO:0051301">
    <property type="term" value="P:cell division"/>
    <property type="evidence" value="ECO:0007669"/>
    <property type="project" value="UniProtKB-KW"/>
</dbReference>
<dbReference type="GO" id="GO:0051304">
    <property type="term" value="P:chromosome separation"/>
    <property type="evidence" value="ECO:0007669"/>
    <property type="project" value="InterPro"/>
</dbReference>
<dbReference type="GO" id="GO:0006260">
    <property type="term" value="P:DNA replication"/>
    <property type="evidence" value="ECO:0007669"/>
    <property type="project" value="UniProtKB-UniRule"/>
</dbReference>
<dbReference type="Gene3D" id="1.10.10.10">
    <property type="entry name" value="Winged helix-like DNA-binding domain superfamily/Winged helix DNA-binding domain"/>
    <property type="match status" value="2"/>
</dbReference>
<dbReference type="HAMAP" id="MF_01804">
    <property type="entry name" value="ScpB"/>
    <property type="match status" value="1"/>
</dbReference>
<dbReference type="InterPro" id="IPR005234">
    <property type="entry name" value="ScpB_csome_segregation"/>
</dbReference>
<dbReference type="InterPro" id="IPR036388">
    <property type="entry name" value="WH-like_DNA-bd_sf"/>
</dbReference>
<dbReference type="InterPro" id="IPR036390">
    <property type="entry name" value="WH_DNA-bd_sf"/>
</dbReference>
<dbReference type="NCBIfam" id="TIGR00281">
    <property type="entry name" value="SMC-Scp complex subunit ScpB"/>
    <property type="match status" value="1"/>
</dbReference>
<dbReference type="PANTHER" id="PTHR34298">
    <property type="entry name" value="SEGREGATION AND CONDENSATION PROTEIN B"/>
    <property type="match status" value="1"/>
</dbReference>
<dbReference type="PANTHER" id="PTHR34298:SF2">
    <property type="entry name" value="SEGREGATION AND CONDENSATION PROTEIN B"/>
    <property type="match status" value="1"/>
</dbReference>
<dbReference type="Pfam" id="PF04079">
    <property type="entry name" value="SMC_ScpB"/>
    <property type="match status" value="1"/>
</dbReference>
<dbReference type="PIRSF" id="PIRSF019345">
    <property type="entry name" value="ScpB"/>
    <property type="match status" value="1"/>
</dbReference>
<dbReference type="SUPFAM" id="SSF46785">
    <property type="entry name" value="Winged helix' DNA-binding domain"/>
    <property type="match status" value="2"/>
</dbReference>
<keyword id="KW-0131">Cell cycle</keyword>
<keyword id="KW-0132">Cell division</keyword>
<keyword id="KW-0159">Chromosome partition</keyword>
<keyword id="KW-0963">Cytoplasm</keyword>
<comment type="function">
    <text evidence="1">Participates in chromosomal partition during cell division. May act via the formation of a condensin-like complex containing Smc and ScpA that pull DNA away from mid-cell into both cell halves.</text>
</comment>
<comment type="subunit">
    <text evidence="1">Homodimer. Homodimerization may be required to stabilize the binding of ScpA to the Smc head domains. Component of a cohesin-like complex composed of ScpA, ScpB and the Smc homodimer, in which ScpA and ScpB bind to the head domain of Smc. The presence of the three proteins is required for the association of the complex with DNA.</text>
</comment>
<comment type="subcellular location">
    <subcellularLocation>
        <location evidence="1">Cytoplasm</location>
    </subcellularLocation>
    <text evidence="1">Associated with two foci at the outer edges of the nucleoid region in young cells, and at four foci within both cell halves in older cells.</text>
</comment>
<comment type="similarity">
    <text evidence="1">Belongs to the ScpB family.</text>
</comment>